<name>EFTS_CUPPJ</name>
<keyword id="KW-0963">Cytoplasm</keyword>
<keyword id="KW-0251">Elongation factor</keyword>
<keyword id="KW-0648">Protein biosynthesis</keyword>
<proteinExistence type="inferred from homology"/>
<protein>
    <recommendedName>
        <fullName evidence="1">Elongation factor Ts</fullName>
        <shortName evidence="1">EF-Ts</shortName>
    </recommendedName>
</protein>
<sequence length="292" mass="30956">MAAITASMVAELRAKTDAPMMECKKALTEADGDLNKAEELLRVKLGNKASKAASRVTAEGVVASFIDGTTGVLVELNCETDFVSKNDDFLAFSAKVAELIAKQNPADVAALSALELDGVSVEATRTALIGKIGENLTIRRFVRYANGGKLVSYLHGTRIGVMVEFDGDEAAAKDVAMHVAAMKPVSLSAEQVPADLIAKERSIAEQKAAESGKPAEIAAKMVEGSVQKYLKEVSLFNQPFVKNDKQTVEQMLKAANTTVKGFTLYVVGEGIEKKQDDFAAEVAAQVAAAQKG</sequence>
<evidence type="ECO:0000255" key="1">
    <source>
        <dbReference type="HAMAP-Rule" id="MF_00050"/>
    </source>
</evidence>
<feature type="chain" id="PRO_0000241514" description="Elongation factor Ts">
    <location>
        <begin position="1"/>
        <end position="292"/>
    </location>
</feature>
<feature type="region of interest" description="Involved in Mg(2+) ion dislocation from EF-Tu" evidence="1">
    <location>
        <begin position="80"/>
        <end position="83"/>
    </location>
</feature>
<organism>
    <name type="scientific">Cupriavidus pinatubonensis (strain JMP 134 / LMG 1197)</name>
    <name type="common">Cupriavidus necator (strain JMP 134)</name>
    <dbReference type="NCBI Taxonomy" id="264198"/>
    <lineage>
        <taxon>Bacteria</taxon>
        <taxon>Pseudomonadati</taxon>
        <taxon>Pseudomonadota</taxon>
        <taxon>Betaproteobacteria</taxon>
        <taxon>Burkholderiales</taxon>
        <taxon>Burkholderiaceae</taxon>
        <taxon>Cupriavidus</taxon>
    </lineage>
</organism>
<gene>
    <name evidence="1" type="primary">tsf</name>
    <name type="ordered locus">Reut_A1880</name>
</gene>
<comment type="function">
    <text evidence="1">Associates with the EF-Tu.GDP complex and induces the exchange of GDP to GTP. It remains bound to the aminoacyl-tRNA.EF-Tu.GTP complex up to the GTP hydrolysis stage on the ribosome.</text>
</comment>
<comment type="subcellular location">
    <subcellularLocation>
        <location evidence="1">Cytoplasm</location>
    </subcellularLocation>
</comment>
<comment type="similarity">
    <text evidence="1">Belongs to the EF-Ts family.</text>
</comment>
<accession>Q470D8</accession>
<dbReference type="EMBL" id="CP000090">
    <property type="protein sequence ID" value="AAZ61245.1"/>
    <property type="molecule type" value="Genomic_DNA"/>
</dbReference>
<dbReference type="SMR" id="Q470D8"/>
<dbReference type="STRING" id="264198.Reut_A1880"/>
<dbReference type="KEGG" id="reu:Reut_A1880"/>
<dbReference type="eggNOG" id="COG0264">
    <property type="taxonomic scope" value="Bacteria"/>
</dbReference>
<dbReference type="HOGENOM" id="CLU_047155_0_2_4"/>
<dbReference type="OrthoDB" id="9808348at2"/>
<dbReference type="GO" id="GO:0005737">
    <property type="term" value="C:cytoplasm"/>
    <property type="evidence" value="ECO:0007669"/>
    <property type="project" value="UniProtKB-SubCell"/>
</dbReference>
<dbReference type="GO" id="GO:0003746">
    <property type="term" value="F:translation elongation factor activity"/>
    <property type="evidence" value="ECO:0007669"/>
    <property type="project" value="UniProtKB-UniRule"/>
</dbReference>
<dbReference type="CDD" id="cd14275">
    <property type="entry name" value="UBA_EF-Ts"/>
    <property type="match status" value="1"/>
</dbReference>
<dbReference type="FunFam" id="1.10.286.20:FF:000001">
    <property type="entry name" value="Elongation factor Ts"/>
    <property type="match status" value="1"/>
</dbReference>
<dbReference type="FunFam" id="1.10.8.10:FF:000001">
    <property type="entry name" value="Elongation factor Ts"/>
    <property type="match status" value="1"/>
</dbReference>
<dbReference type="Gene3D" id="1.10.286.20">
    <property type="match status" value="1"/>
</dbReference>
<dbReference type="Gene3D" id="1.10.8.10">
    <property type="entry name" value="DNA helicase RuvA subunit, C-terminal domain"/>
    <property type="match status" value="1"/>
</dbReference>
<dbReference type="Gene3D" id="3.30.479.20">
    <property type="entry name" value="Elongation factor Ts, dimerisation domain"/>
    <property type="match status" value="2"/>
</dbReference>
<dbReference type="HAMAP" id="MF_00050">
    <property type="entry name" value="EF_Ts"/>
    <property type="match status" value="1"/>
</dbReference>
<dbReference type="InterPro" id="IPR036402">
    <property type="entry name" value="EF-Ts_dimer_sf"/>
</dbReference>
<dbReference type="InterPro" id="IPR001816">
    <property type="entry name" value="Transl_elong_EFTs/EF1B"/>
</dbReference>
<dbReference type="InterPro" id="IPR014039">
    <property type="entry name" value="Transl_elong_EFTs/EF1B_dimer"/>
</dbReference>
<dbReference type="InterPro" id="IPR018101">
    <property type="entry name" value="Transl_elong_Ts_CS"/>
</dbReference>
<dbReference type="InterPro" id="IPR009060">
    <property type="entry name" value="UBA-like_sf"/>
</dbReference>
<dbReference type="NCBIfam" id="TIGR00116">
    <property type="entry name" value="tsf"/>
    <property type="match status" value="1"/>
</dbReference>
<dbReference type="PANTHER" id="PTHR11741">
    <property type="entry name" value="ELONGATION FACTOR TS"/>
    <property type="match status" value="1"/>
</dbReference>
<dbReference type="PANTHER" id="PTHR11741:SF0">
    <property type="entry name" value="ELONGATION FACTOR TS, MITOCHONDRIAL"/>
    <property type="match status" value="1"/>
</dbReference>
<dbReference type="Pfam" id="PF00889">
    <property type="entry name" value="EF_TS"/>
    <property type="match status" value="1"/>
</dbReference>
<dbReference type="SUPFAM" id="SSF54713">
    <property type="entry name" value="Elongation factor Ts (EF-Ts), dimerisation domain"/>
    <property type="match status" value="2"/>
</dbReference>
<dbReference type="SUPFAM" id="SSF46934">
    <property type="entry name" value="UBA-like"/>
    <property type="match status" value="1"/>
</dbReference>
<dbReference type="PROSITE" id="PS01127">
    <property type="entry name" value="EF_TS_2"/>
    <property type="match status" value="1"/>
</dbReference>
<reference key="1">
    <citation type="journal article" date="2010" name="PLoS ONE">
        <title>The complete multipartite genome sequence of Cupriavidus necator JMP134, a versatile pollutant degrader.</title>
        <authorList>
            <person name="Lykidis A."/>
            <person name="Perez-Pantoja D."/>
            <person name="Ledger T."/>
            <person name="Mavromatis K."/>
            <person name="Anderson I.J."/>
            <person name="Ivanova N.N."/>
            <person name="Hooper S.D."/>
            <person name="Lapidus A."/>
            <person name="Lucas S."/>
            <person name="Gonzalez B."/>
            <person name="Kyrpides N.C."/>
        </authorList>
    </citation>
    <scope>NUCLEOTIDE SEQUENCE [LARGE SCALE GENOMIC DNA]</scope>
    <source>
        <strain>JMP134 / LMG 1197</strain>
    </source>
</reference>